<protein>
    <recommendedName>
        <fullName>Apolipoprotein A-II</fullName>
        <shortName>Apo-AII</shortName>
        <shortName>ApoA-II</shortName>
    </recommendedName>
    <alternativeName>
        <fullName>Apolipoprotein A2</fullName>
    </alternativeName>
    <component>
        <recommendedName>
            <fullName>Proapolipoprotein A-II</fullName>
            <shortName>ProapoA-II</shortName>
        </recommendedName>
    </component>
    <component>
        <recommendedName>
            <fullName>Truncated apolipoprotein A-II</fullName>
        </recommendedName>
    </component>
</protein>
<comment type="function">
    <text>May stabilize HDL (high density lipoprotein) structure by its association with lipids, and affect the HDL metabolism.</text>
</comment>
<comment type="subunit">
    <text evidence="1">Monomer. Interacts with NAXE and NDRG1 (By similarity).</text>
</comment>
<comment type="subcellular location">
    <subcellularLocation>
        <location evidence="1">Secreted</location>
    </subcellularLocation>
</comment>
<comment type="similarity">
    <text evidence="3">Belongs to the apolipoprotein A2 family.</text>
</comment>
<dbReference type="EMBL" id="AKZM01052956">
    <property type="status" value="NOT_ANNOTATED_CDS"/>
    <property type="molecule type" value="Genomic_DNA"/>
</dbReference>
<dbReference type="SMR" id="P0DN36"/>
<dbReference type="GO" id="GO:0034366">
    <property type="term" value="C:spherical high-density lipoprotein particle"/>
    <property type="evidence" value="ECO:0007669"/>
    <property type="project" value="TreeGrafter"/>
</dbReference>
<dbReference type="GO" id="GO:0120020">
    <property type="term" value="F:cholesterol transfer activity"/>
    <property type="evidence" value="ECO:0007669"/>
    <property type="project" value="TreeGrafter"/>
</dbReference>
<dbReference type="GO" id="GO:0008035">
    <property type="term" value="F:high-density lipoprotein particle binding"/>
    <property type="evidence" value="ECO:0007669"/>
    <property type="project" value="TreeGrafter"/>
</dbReference>
<dbReference type="GO" id="GO:0008289">
    <property type="term" value="F:lipid binding"/>
    <property type="evidence" value="ECO:0007669"/>
    <property type="project" value="InterPro"/>
</dbReference>
<dbReference type="GO" id="GO:0042632">
    <property type="term" value="P:cholesterol homeostasis"/>
    <property type="evidence" value="ECO:0007669"/>
    <property type="project" value="TreeGrafter"/>
</dbReference>
<dbReference type="GO" id="GO:0030301">
    <property type="term" value="P:cholesterol transport"/>
    <property type="evidence" value="ECO:0007669"/>
    <property type="project" value="TreeGrafter"/>
</dbReference>
<dbReference type="GO" id="GO:0042157">
    <property type="term" value="P:lipoprotein metabolic process"/>
    <property type="evidence" value="ECO:0007669"/>
    <property type="project" value="InterPro"/>
</dbReference>
<dbReference type="GO" id="GO:0050766">
    <property type="term" value="P:positive regulation of phagocytosis"/>
    <property type="evidence" value="ECO:0000250"/>
    <property type="project" value="UniProtKB"/>
</dbReference>
<dbReference type="GO" id="GO:0050821">
    <property type="term" value="P:protein stabilization"/>
    <property type="evidence" value="ECO:0000250"/>
    <property type="project" value="UniProtKB"/>
</dbReference>
<dbReference type="Gene3D" id="6.10.250.100">
    <property type="match status" value="1"/>
</dbReference>
<dbReference type="InterPro" id="IPR006801">
    <property type="entry name" value="ApoA-II"/>
</dbReference>
<dbReference type="InterPro" id="IPR036172">
    <property type="entry name" value="ApoA-II_sf"/>
</dbReference>
<dbReference type="PANTHER" id="PTHR11027">
    <property type="entry name" value="APOLIPOPROTEIN A-II"/>
    <property type="match status" value="1"/>
</dbReference>
<dbReference type="PANTHER" id="PTHR11027:SF0">
    <property type="entry name" value="APOLIPOPROTEIN A-II"/>
    <property type="match status" value="1"/>
</dbReference>
<dbReference type="Pfam" id="PF04711">
    <property type="entry name" value="ApoA-II"/>
    <property type="match status" value="1"/>
</dbReference>
<dbReference type="SUPFAM" id="SSF82936">
    <property type="entry name" value="Apolipoprotein A-II"/>
    <property type="match status" value="1"/>
</dbReference>
<name>APOA2_CERSI</name>
<accession>P0DN36</accession>
<gene>
    <name type="primary">APOA2</name>
</gene>
<feature type="signal peptide" evidence="2">
    <location>
        <begin position="1"/>
        <end position="18"/>
    </location>
</feature>
<feature type="chain" id="PRO_0000435006" description="Proapolipoprotein A-II">
    <location>
        <begin position="19"/>
        <end position="100"/>
    </location>
</feature>
<feature type="chain" id="PRO_0000435007" description="Apolipoprotein A-II" evidence="1">
    <location>
        <begin position="24"/>
        <end position="100"/>
    </location>
</feature>
<feature type="chain" id="PRO_0000435008" description="Truncated apolipoprotein A-II" evidence="1">
    <location>
        <begin position="24"/>
        <end position="99"/>
    </location>
</feature>
<sequence length="100" mass="11282">MKLLAVTVLLLTICSLEGSLVRRQVEEQSLQSLISQYLHIVTDYGKDLVEKAKTPELQARAKAYFEKTQEQLTPLVKKAGNDLINFLSSFMELKTQPATK</sequence>
<keyword id="KW-0165">Cleavage on pair of basic residues</keyword>
<keyword id="KW-0345">HDL</keyword>
<keyword id="KW-0445">Lipid transport</keyword>
<keyword id="KW-0964">Secreted</keyword>
<keyword id="KW-0732">Signal</keyword>
<keyword id="KW-0813">Transport</keyword>
<reference key="1">
    <citation type="submission" date="2012-05" db="EMBL/GenBank/DDBJ databases">
        <authorList>
            <person name="Di Palma F."/>
            <person name="Alfoldi J."/>
            <person name="Johnson J."/>
            <person name="Berlin A."/>
            <person name="Gnerre S."/>
            <person name="Jaffe D."/>
            <person name="MacCallum I."/>
            <person name="Young S."/>
            <person name="Walker B.J."/>
            <person name="Lindblad-Toh K."/>
        </authorList>
    </citation>
    <scope>NUCLEOTIDE SEQUENCE [LARGE SCALE GENOMIC DNA]</scope>
</reference>
<reference key="2">
    <citation type="unpublished observations" date="2015-10">
        <authorList>
            <person name="Puppione D.L."/>
        </authorList>
    </citation>
    <scope>IDENTIFICATION</scope>
</reference>
<proteinExistence type="inferred from homology"/>
<organism>
    <name type="scientific">Ceratotherium simum</name>
    <name type="common">White rhinoceros</name>
    <name type="synonym">Square-lipped rhinoceros</name>
    <dbReference type="NCBI Taxonomy" id="9807"/>
    <lineage>
        <taxon>Eukaryota</taxon>
        <taxon>Metazoa</taxon>
        <taxon>Chordata</taxon>
        <taxon>Craniata</taxon>
        <taxon>Vertebrata</taxon>
        <taxon>Euteleostomi</taxon>
        <taxon>Mammalia</taxon>
        <taxon>Eutheria</taxon>
        <taxon>Laurasiatheria</taxon>
        <taxon>Perissodactyla</taxon>
        <taxon>Rhinocerotidae</taxon>
        <taxon>Ceratotherium</taxon>
    </lineage>
</organism>
<evidence type="ECO:0000250" key="1">
    <source>
        <dbReference type="UniProtKB" id="P02652"/>
    </source>
</evidence>
<evidence type="ECO:0000255" key="2"/>
<evidence type="ECO:0000305" key="3"/>